<protein>
    <recommendedName>
        <fullName evidence="1">Tryptophan synthase alpha chain</fullName>
        <ecNumber evidence="1">4.2.1.20</ecNumber>
    </recommendedName>
</protein>
<sequence length="270" mass="27728">MVAVEQSEASRLGPVFDSCRANNRAALIGYLPTGYPDVPASVAAMTALVESGCDIIEVGVPYSDPGMDGPTIARATEAALRGGVRVRDTLAAVEAISIAGGRAVVMTYWNPVLRYGVDAFARDLAAAGGLGLITPDLIPDEAQQWLAASEEHRLDRIFLVAPSSTPERLAATVEASRGFVYAASTMGVTGARDAVSQAAPELVGRVKAVSDIPVGVGLGVRSRAQAAQIAQYADGVIVGSALVTALTEGLPRLRALTGELAAGVRLGMSA</sequence>
<comment type="function">
    <text evidence="1">The alpha subunit is responsible for the aldol cleavage of indoleglycerol phosphate to indole and glyceraldehyde 3-phosphate.</text>
</comment>
<comment type="catalytic activity">
    <reaction evidence="1">
        <text>(1S,2R)-1-C-(indol-3-yl)glycerol 3-phosphate + L-serine = D-glyceraldehyde 3-phosphate + L-tryptophan + H2O</text>
        <dbReference type="Rhea" id="RHEA:10532"/>
        <dbReference type="ChEBI" id="CHEBI:15377"/>
        <dbReference type="ChEBI" id="CHEBI:33384"/>
        <dbReference type="ChEBI" id="CHEBI:57912"/>
        <dbReference type="ChEBI" id="CHEBI:58866"/>
        <dbReference type="ChEBI" id="CHEBI:59776"/>
        <dbReference type="EC" id="4.2.1.20"/>
    </reaction>
</comment>
<comment type="pathway">
    <text evidence="1">Amino-acid biosynthesis; L-tryptophan biosynthesis; L-tryptophan from chorismate: step 5/5.</text>
</comment>
<comment type="subunit">
    <text evidence="1">Tetramer of two alpha and two beta chains.</text>
</comment>
<comment type="miscellaneous">
    <text>Was identified as a high-confidence drug target.</text>
</comment>
<comment type="similarity">
    <text evidence="1">Belongs to the TrpA family.</text>
</comment>
<name>TRPA_MYCTU</name>
<feature type="chain" id="PRO_0000098811" description="Tryptophan synthase alpha chain">
    <location>
        <begin position="1"/>
        <end position="270"/>
    </location>
</feature>
<feature type="active site" description="Proton acceptor" evidence="1">
    <location>
        <position position="57"/>
    </location>
</feature>
<feature type="active site" description="Proton acceptor" evidence="1">
    <location>
        <position position="68"/>
    </location>
</feature>
<feature type="helix" evidence="2">
    <location>
        <begin position="13"/>
        <end position="21"/>
    </location>
</feature>
<feature type="strand" evidence="2">
    <location>
        <begin position="26"/>
        <end position="32"/>
    </location>
</feature>
<feature type="helix" evidence="2">
    <location>
        <begin position="38"/>
        <end position="51"/>
    </location>
</feature>
<feature type="strand" evidence="2">
    <location>
        <begin position="54"/>
        <end position="59"/>
    </location>
</feature>
<feature type="helix" evidence="2">
    <location>
        <begin position="70"/>
        <end position="81"/>
    </location>
</feature>
<feature type="helix" evidence="2">
    <location>
        <begin position="86"/>
        <end position="98"/>
    </location>
</feature>
<feature type="strand" evidence="2">
    <location>
        <begin position="103"/>
        <end position="106"/>
    </location>
</feature>
<feature type="helix" evidence="2">
    <location>
        <begin position="109"/>
        <end position="115"/>
    </location>
</feature>
<feature type="helix" evidence="2">
    <location>
        <begin position="117"/>
        <end position="126"/>
    </location>
</feature>
<feature type="strand" evidence="2">
    <location>
        <begin position="131"/>
        <end position="133"/>
    </location>
</feature>
<feature type="helix" evidence="2">
    <location>
        <begin position="139"/>
        <end position="141"/>
    </location>
</feature>
<feature type="helix" evidence="2">
    <location>
        <begin position="143"/>
        <end position="151"/>
    </location>
</feature>
<feature type="strand" evidence="2">
    <location>
        <begin position="155"/>
        <end position="157"/>
    </location>
</feature>
<feature type="helix" evidence="2">
    <location>
        <begin position="166"/>
        <end position="175"/>
    </location>
</feature>
<feature type="strand" evidence="2">
    <location>
        <begin position="180"/>
        <end position="183"/>
    </location>
</feature>
<feature type="helix" evidence="2">
    <location>
        <begin position="198"/>
        <end position="207"/>
    </location>
</feature>
<feature type="strand" evidence="2">
    <location>
        <begin position="214"/>
        <end position="218"/>
    </location>
</feature>
<feature type="helix" evidence="2">
    <location>
        <begin position="223"/>
        <end position="229"/>
    </location>
</feature>
<feature type="turn" evidence="2">
    <location>
        <begin position="230"/>
        <end position="232"/>
    </location>
</feature>
<feature type="strand" evidence="2">
    <location>
        <begin position="234"/>
        <end position="238"/>
    </location>
</feature>
<feature type="helix" evidence="2">
    <location>
        <begin position="240"/>
        <end position="248"/>
    </location>
</feature>
<feature type="helix" evidence="2">
    <location>
        <begin position="250"/>
        <end position="264"/>
    </location>
</feature>
<reference key="1">
    <citation type="journal article" date="1998" name="Nature">
        <title>Deciphering the biology of Mycobacterium tuberculosis from the complete genome sequence.</title>
        <authorList>
            <person name="Cole S.T."/>
            <person name="Brosch R."/>
            <person name="Parkhill J."/>
            <person name="Garnier T."/>
            <person name="Churcher C.M."/>
            <person name="Harris D.E."/>
            <person name="Gordon S.V."/>
            <person name="Eiglmeier K."/>
            <person name="Gas S."/>
            <person name="Barry C.E. III"/>
            <person name="Tekaia F."/>
            <person name="Badcock K."/>
            <person name="Basham D."/>
            <person name="Brown D."/>
            <person name="Chillingworth T."/>
            <person name="Connor R."/>
            <person name="Davies R.M."/>
            <person name="Devlin K."/>
            <person name="Feltwell T."/>
            <person name="Gentles S."/>
            <person name="Hamlin N."/>
            <person name="Holroyd S."/>
            <person name="Hornsby T."/>
            <person name="Jagels K."/>
            <person name="Krogh A."/>
            <person name="McLean J."/>
            <person name="Moule S."/>
            <person name="Murphy L.D."/>
            <person name="Oliver S."/>
            <person name="Osborne J."/>
            <person name="Quail M.A."/>
            <person name="Rajandream M.A."/>
            <person name="Rogers J."/>
            <person name="Rutter S."/>
            <person name="Seeger K."/>
            <person name="Skelton S."/>
            <person name="Squares S."/>
            <person name="Squares R."/>
            <person name="Sulston J.E."/>
            <person name="Taylor K."/>
            <person name="Whitehead S."/>
            <person name="Barrell B.G."/>
        </authorList>
    </citation>
    <scope>NUCLEOTIDE SEQUENCE [LARGE SCALE GENOMIC DNA]</scope>
    <source>
        <strain>ATCC 25618 / H37Rv</strain>
    </source>
</reference>
<reference key="2">
    <citation type="journal article" date="2008" name="BMC Syst. Biol.">
        <title>targetTB: a target identification pipeline for Mycobacterium tuberculosis through an interactome, reactome and genome-scale structural analysis.</title>
        <authorList>
            <person name="Raman K."/>
            <person name="Yeturu K."/>
            <person name="Chandra N."/>
        </authorList>
    </citation>
    <scope>IDENTIFICATION AS A DRUG TARGET [LARGE SCALE ANALYSIS]</scope>
</reference>
<reference key="3">
    <citation type="journal article" date="2011" name="Mol. Cell. Proteomics">
        <title>Proteogenomic analysis of Mycobacterium tuberculosis by high resolution mass spectrometry.</title>
        <authorList>
            <person name="Kelkar D.S."/>
            <person name="Kumar D."/>
            <person name="Kumar P."/>
            <person name="Balakrishnan L."/>
            <person name="Muthusamy B."/>
            <person name="Yadav A.K."/>
            <person name="Shrivastava P."/>
            <person name="Marimuthu A."/>
            <person name="Anand S."/>
            <person name="Sundaram H."/>
            <person name="Kingsbury R."/>
            <person name="Harsha H.C."/>
            <person name="Nair B."/>
            <person name="Prasad T.S."/>
            <person name="Chauhan D.S."/>
            <person name="Katoch K."/>
            <person name="Katoch V.M."/>
            <person name="Kumar P."/>
            <person name="Chaerkady R."/>
            <person name="Ramachandran S."/>
            <person name="Dash D."/>
            <person name="Pandey A."/>
        </authorList>
    </citation>
    <scope>IDENTIFICATION BY MASS SPECTROMETRY [LARGE SCALE ANALYSIS]</scope>
    <source>
        <strain>ATCC 25618 / H37Rv</strain>
    </source>
</reference>
<gene>
    <name evidence="1" type="primary">trpA</name>
    <name type="ordered locus">Rv1613</name>
    <name type="ORF">MTCY01B2.05</name>
</gene>
<accession>P9WFY1</accession>
<accession>L0T7F3</accession>
<accession>O06130</accession>
<accession>P66980</accession>
<proteinExistence type="evidence at protein level"/>
<organism>
    <name type="scientific">Mycobacterium tuberculosis (strain ATCC 25618 / H37Rv)</name>
    <dbReference type="NCBI Taxonomy" id="83332"/>
    <lineage>
        <taxon>Bacteria</taxon>
        <taxon>Bacillati</taxon>
        <taxon>Actinomycetota</taxon>
        <taxon>Actinomycetes</taxon>
        <taxon>Mycobacteriales</taxon>
        <taxon>Mycobacteriaceae</taxon>
        <taxon>Mycobacterium</taxon>
        <taxon>Mycobacterium tuberculosis complex</taxon>
    </lineage>
</organism>
<evidence type="ECO:0000255" key="1">
    <source>
        <dbReference type="HAMAP-Rule" id="MF_00131"/>
    </source>
</evidence>
<evidence type="ECO:0007829" key="2">
    <source>
        <dbReference type="PDB" id="5TCH"/>
    </source>
</evidence>
<keyword id="KW-0002">3D-structure</keyword>
<keyword id="KW-0028">Amino-acid biosynthesis</keyword>
<keyword id="KW-0057">Aromatic amino acid biosynthesis</keyword>
<keyword id="KW-0456">Lyase</keyword>
<keyword id="KW-1185">Reference proteome</keyword>
<keyword id="KW-0822">Tryptophan biosynthesis</keyword>
<dbReference type="EC" id="4.2.1.20" evidence="1"/>
<dbReference type="EMBL" id="AL123456">
    <property type="protein sequence ID" value="CCP44377.1"/>
    <property type="molecule type" value="Genomic_DNA"/>
</dbReference>
<dbReference type="PIR" id="C70557">
    <property type="entry name" value="C70557"/>
</dbReference>
<dbReference type="RefSeq" id="NP_216129.1">
    <property type="nucleotide sequence ID" value="NC_000962.3"/>
</dbReference>
<dbReference type="RefSeq" id="WP_003407999.1">
    <property type="nucleotide sequence ID" value="NZ_NVQJ01000016.1"/>
</dbReference>
<dbReference type="PDB" id="5OCW">
    <property type="method" value="X-ray"/>
    <property type="resolution" value="4.00 A"/>
    <property type="chains" value="A/C/E/G/I/K/M/O/Q/S/U/W=1-270"/>
</dbReference>
<dbReference type="PDB" id="5TCF">
    <property type="method" value="X-ray"/>
    <property type="resolution" value="2.46 A"/>
    <property type="chains" value="A/C/E/G=1-270"/>
</dbReference>
<dbReference type="PDB" id="5TCG">
    <property type="method" value="X-ray"/>
    <property type="resolution" value="2.40 A"/>
    <property type="chains" value="A/C/E/G=1-270"/>
</dbReference>
<dbReference type="PDB" id="5TCH">
    <property type="method" value="X-ray"/>
    <property type="resolution" value="2.35 A"/>
    <property type="chains" value="A/C/E/G=1-270"/>
</dbReference>
<dbReference type="PDB" id="5TCI">
    <property type="method" value="X-ray"/>
    <property type="resolution" value="2.45 A"/>
    <property type="chains" value="A/C/E/G=1-270"/>
</dbReference>
<dbReference type="PDB" id="5TCJ">
    <property type="method" value="X-ray"/>
    <property type="resolution" value="2.40 A"/>
    <property type="chains" value="A/C/E/G=1-270"/>
</dbReference>
<dbReference type="PDB" id="6DWE">
    <property type="method" value="X-ray"/>
    <property type="resolution" value="2.69 A"/>
    <property type="chains" value="A/C/E/G=1-270"/>
</dbReference>
<dbReference type="PDB" id="6E9P">
    <property type="method" value="X-ray"/>
    <property type="resolution" value="2.57 A"/>
    <property type="chains" value="A/C/E/G=1-270"/>
</dbReference>
<dbReference type="PDB" id="6U6C">
    <property type="method" value="X-ray"/>
    <property type="resolution" value="2.40 A"/>
    <property type="chains" value="A/C/E/G=1-270"/>
</dbReference>
<dbReference type="PDB" id="6UAP">
    <property type="method" value="X-ray"/>
    <property type="resolution" value="2.75 A"/>
    <property type="chains" value="A/C/E/G=1-270"/>
</dbReference>
<dbReference type="PDB" id="6UB9">
    <property type="method" value="X-ray"/>
    <property type="resolution" value="2.78 A"/>
    <property type="chains" value="A/C/E/G=1-270"/>
</dbReference>
<dbReference type="PDB" id="6USA">
    <property type="method" value="X-ray"/>
    <property type="resolution" value="2.41 A"/>
    <property type="chains" value="A/C/E/G=1-270"/>
</dbReference>
<dbReference type="PDBsum" id="5OCW"/>
<dbReference type="PDBsum" id="5TCF"/>
<dbReference type="PDBsum" id="5TCG"/>
<dbReference type="PDBsum" id="5TCH"/>
<dbReference type="PDBsum" id="5TCI"/>
<dbReference type="PDBsum" id="5TCJ"/>
<dbReference type="PDBsum" id="6DWE"/>
<dbReference type="PDBsum" id="6E9P"/>
<dbReference type="PDBsum" id="6U6C"/>
<dbReference type="PDBsum" id="6UAP"/>
<dbReference type="PDBsum" id="6UB9"/>
<dbReference type="PDBsum" id="6USA"/>
<dbReference type="SMR" id="P9WFY1"/>
<dbReference type="FunCoup" id="P9WFY1">
    <property type="interactions" value="249"/>
</dbReference>
<dbReference type="STRING" id="83332.Rv1613"/>
<dbReference type="PaxDb" id="83332-Rv1613"/>
<dbReference type="DNASU" id="885291"/>
<dbReference type="GeneID" id="45425581"/>
<dbReference type="GeneID" id="885291"/>
<dbReference type="KEGG" id="mtu:Rv1613"/>
<dbReference type="KEGG" id="mtv:RVBD_1613"/>
<dbReference type="TubercuList" id="Rv1613"/>
<dbReference type="eggNOG" id="COG0159">
    <property type="taxonomic scope" value="Bacteria"/>
</dbReference>
<dbReference type="InParanoid" id="P9WFY1"/>
<dbReference type="OrthoDB" id="9804578at2"/>
<dbReference type="PhylomeDB" id="P9WFY1"/>
<dbReference type="UniPathway" id="UPA00035">
    <property type="reaction ID" value="UER00044"/>
</dbReference>
<dbReference type="Proteomes" id="UP000001584">
    <property type="component" value="Chromosome"/>
</dbReference>
<dbReference type="GO" id="GO:0005829">
    <property type="term" value="C:cytosol"/>
    <property type="evidence" value="ECO:0000318"/>
    <property type="project" value="GO_Central"/>
</dbReference>
<dbReference type="GO" id="GO:0005886">
    <property type="term" value="C:plasma membrane"/>
    <property type="evidence" value="ECO:0007005"/>
    <property type="project" value="MTBBASE"/>
</dbReference>
<dbReference type="GO" id="GO:0004834">
    <property type="term" value="F:tryptophan synthase activity"/>
    <property type="evidence" value="ECO:0000318"/>
    <property type="project" value="GO_Central"/>
</dbReference>
<dbReference type="GO" id="GO:0000162">
    <property type="term" value="P:L-tryptophan biosynthetic process"/>
    <property type="evidence" value="ECO:0000318"/>
    <property type="project" value="GO_Central"/>
</dbReference>
<dbReference type="CDD" id="cd04724">
    <property type="entry name" value="Tryptophan_synthase_alpha"/>
    <property type="match status" value="1"/>
</dbReference>
<dbReference type="FunFam" id="3.20.20.70:FF:000037">
    <property type="entry name" value="Tryptophan synthase alpha chain"/>
    <property type="match status" value="1"/>
</dbReference>
<dbReference type="Gene3D" id="3.20.20.70">
    <property type="entry name" value="Aldolase class I"/>
    <property type="match status" value="1"/>
</dbReference>
<dbReference type="HAMAP" id="MF_00131">
    <property type="entry name" value="Trp_synth_alpha"/>
    <property type="match status" value="1"/>
</dbReference>
<dbReference type="InterPro" id="IPR013785">
    <property type="entry name" value="Aldolase_TIM"/>
</dbReference>
<dbReference type="InterPro" id="IPR011060">
    <property type="entry name" value="RibuloseP-bd_barrel"/>
</dbReference>
<dbReference type="InterPro" id="IPR018204">
    <property type="entry name" value="Trp_synthase_alpha_AS"/>
</dbReference>
<dbReference type="InterPro" id="IPR002028">
    <property type="entry name" value="Trp_synthase_suA"/>
</dbReference>
<dbReference type="NCBIfam" id="TIGR00262">
    <property type="entry name" value="trpA"/>
    <property type="match status" value="1"/>
</dbReference>
<dbReference type="PANTHER" id="PTHR43406:SF1">
    <property type="entry name" value="TRYPTOPHAN SYNTHASE ALPHA CHAIN, CHLOROPLASTIC"/>
    <property type="match status" value="1"/>
</dbReference>
<dbReference type="PANTHER" id="PTHR43406">
    <property type="entry name" value="TRYPTOPHAN SYNTHASE, ALPHA CHAIN"/>
    <property type="match status" value="1"/>
</dbReference>
<dbReference type="Pfam" id="PF00290">
    <property type="entry name" value="Trp_syntA"/>
    <property type="match status" value="1"/>
</dbReference>
<dbReference type="SUPFAM" id="SSF51366">
    <property type="entry name" value="Ribulose-phoshate binding barrel"/>
    <property type="match status" value="1"/>
</dbReference>
<dbReference type="PROSITE" id="PS00167">
    <property type="entry name" value="TRP_SYNTHASE_ALPHA"/>
    <property type="match status" value="1"/>
</dbReference>